<comment type="similarity">
    <text evidence="1">Belongs to the UPF0304 family.</text>
</comment>
<gene>
    <name evidence="1" type="primary">yfbU</name>
    <name type="ordered locus">ECED1_2758</name>
</gene>
<proteinExistence type="inferred from homology"/>
<protein>
    <recommendedName>
        <fullName evidence="1">UPF0304 protein YfbU</fullName>
    </recommendedName>
</protein>
<feature type="chain" id="PRO_1000148419" description="UPF0304 protein YfbU">
    <location>
        <begin position="1"/>
        <end position="164"/>
    </location>
</feature>
<evidence type="ECO:0000255" key="1">
    <source>
        <dbReference type="HAMAP-Rule" id="MF_00762"/>
    </source>
</evidence>
<name>YFBU_ECO81</name>
<organism>
    <name type="scientific">Escherichia coli O81 (strain ED1a)</name>
    <dbReference type="NCBI Taxonomy" id="585397"/>
    <lineage>
        <taxon>Bacteria</taxon>
        <taxon>Pseudomonadati</taxon>
        <taxon>Pseudomonadota</taxon>
        <taxon>Gammaproteobacteria</taxon>
        <taxon>Enterobacterales</taxon>
        <taxon>Enterobacteriaceae</taxon>
        <taxon>Escherichia</taxon>
    </lineage>
</organism>
<reference key="1">
    <citation type="journal article" date="2009" name="PLoS Genet.">
        <title>Organised genome dynamics in the Escherichia coli species results in highly diverse adaptive paths.</title>
        <authorList>
            <person name="Touchon M."/>
            <person name="Hoede C."/>
            <person name="Tenaillon O."/>
            <person name="Barbe V."/>
            <person name="Baeriswyl S."/>
            <person name="Bidet P."/>
            <person name="Bingen E."/>
            <person name="Bonacorsi S."/>
            <person name="Bouchier C."/>
            <person name="Bouvet O."/>
            <person name="Calteau A."/>
            <person name="Chiapello H."/>
            <person name="Clermont O."/>
            <person name="Cruveiller S."/>
            <person name="Danchin A."/>
            <person name="Diard M."/>
            <person name="Dossat C."/>
            <person name="Karoui M.E."/>
            <person name="Frapy E."/>
            <person name="Garry L."/>
            <person name="Ghigo J.M."/>
            <person name="Gilles A.M."/>
            <person name="Johnson J."/>
            <person name="Le Bouguenec C."/>
            <person name="Lescat M."/>
            <person name="Mangenot S."/>
            <person name="Martinez-Jehanne V."/>
            <person name="Matic I."/>
            <person name="Nassif X."/>
            <person name="Oztas S."/>
            <person name="Petit M.A."/>
            <person name="Pichon C."/>
            <person name="Rouy Z."/>
            <person name="Ruf C.S."/>
            <person name="Schneider D."/>
            <person name="Tourret J."/>
            <person name="Vacherie B."/>
            <person name="Vallenet D."/>
            <person name="Medigue C."/>
            <person name="Rocha E.P.C."/>
            <person name="Denamur E."/>
        </authorList>
    </citation>
    <scope>NUCLEOTIDE SEQUENCE [LARGE SCALE GENOMIC DNA]</scope>
    <source>
        <strain>ED1a</strain>
    </source>
</reference>
<accession>B7MXH3</accession>
<dbReference type="EMBL" id="CU928162">
    <property type="protein sequence ID" value="CAR08789.1"/>
    <property type="molecule type" value="Genomic_DNA"/>
</dbReference>
<dbReference type="RefSeq" id="WP_000426124.1">
    <property type="nucleotide sequence ID" value="NC_011745.1"/>
</dbReference>
<dbReference type="SMR" id="B7MXH3"/>
<dbReference type="KEGG" id="ecq:ECED1_2758"/>
<dbReference type="HOGENOM" id="CLU_101021_1_0_6"/>
<dbReference type="Proteomes" id="UP000000748">
    <property type="component" value="Chromosome"/>
</dbReference>
<dbReference type="FunFam" id="1.10.3190.10:FF:000001">
    <property type="entry name" value="UPF0304 protein YfbU"/>
    <property type="match status" value="1"/>
</dbReference>
<dbReference type="Gene3D" id="1.10.287.680">
    <property type="entry name" value="Helix hairpin bin"/>
    <property type="match status" value="1"/>
</dbReference>
<dbReference type="Gene3D" id="1.10.3190.10">
    <property type="entry name" value="yfbu gene product, domain 2"/>
    <property type="match status" value="1"/>
</dbReference>
<dbReference type="HAMAP" id="MF_00762">
    <property type="entry name" value="UPF0304"/>
    <property type="match status" value="1"/>
</dbReference>
<dbReference type="InterPro" id="IPR005587">
    <property type="entry name" value="UPF0304_YfbU"/>
</dbReference>
<dbReference type="InterPro" id="IPR023146">
    <property type="entry name" value="YfbU_alpha-helical_sf"/>
</dbReference>
<dbReference type="InterPro" id="IPR023145">
    <property type="entry name" value="YfbU_helix-hairpin_sf"/>
</dbReference>
<dbReference type="NCBIfam" id="NF003936">
    <property type="entry name" value="PRK05445.1"/>
    <property type="match status" value="1"/>
</dbReference>
<dbReference type="Pfam" id="PF03887">
    <property type="entry name" value="YfbU"/>
    <property type="match status" value="1"/>
</dbReference>
<dbReference type="PIRSF" id="PIRSF006272">
    <property type="entry name" value="UCP006272"/>
    <property type="match status" value="1"/>
</dbReference>
<dbReference type="SUPFAM" id="SSF116960">
    <property type="entry name" value="YfbU-like"/>
    <property type="match status" value="1"/>
</dbReference>
<sequence>MEMTNAQRLILSNQYKMMTMLDPANAERYRRLQTIIERGYGLQMRELDREFGELKEETCRTIIDIMEMYHALHVSWSNLQDQQSIDERRVTFLGFDAATEARYLGYVRFMVNVEGRYTHFDAGTHGFNAQTPMWEKYQRMLNVWHACPRQYHLSANEINQIINA</sequence>